<feature type="chain" id="PRO_1000126157" description="L-lactate dehydrogenase">
    <location>
        <begin position="1"/>
        <end position="317"/>
    </location>
</feature>
<feature type="active site" description="Proton acceptor" evidence="1">
    <location>
        <position position="177"/>
    </location>
</feature>
<feature type="binding site" evidence="1">
    <location>
        <position position="16"/>
    </location>
    <ligand>
        <name>NAD(+)</name>
        <dbReference type="ChEBI" id="CHEBI:57540"/>
    </ligand>
</feature>
<feature type="binding site" evidence="1">
    <location>
        <position position="37"/>
    </location>
    <ligand>
        <name>NAD(+)</name>
        <dbReference type="ChEBI" id="CHEBI:57540"/>
    </ligand>
</feature>
<feature type="binding site" evidence="1">
    <location>
        <position position="42"/>
    </location>
    <ligand>
        <name>NAD(+)</name>
        <dbReference type="ChEBI" id="CHEBI:57540"/>
    </ligand>
</feature>
<feature type="binding site" evidence="1">
    <location>
        <position position="67"/>
    </location>
    <ligand>
        <name>NAD(+)</name>
        <dbReference type="ChEBI" id="CHEBI:57540"/>
    </ligand>
</feature>
<feature type="binding site" evidence="1">
    <location>
        <begin position="81"/>
        <end position="82"/>
    </location>
    <ligand>
        <name>NAD(+)</name>
        <dbReference type="ChEBI" id="CHEBI:57540"/>
    </ligand>
</feature>
<feature type="binding site" evidence="1">
    <location>
        <position position="84"/>
    </location>
    <ligand>
        <name>substrate</name>
    </ligand>
</feature>
<feature type="binding site" evidence="1">
    <location>
        <position position="90"/>
    </location>
    <ligand>
        <name>substrate</name>
    </ligand>
</feature>
<feature type="binding site" evidence="1">
    <location>
        <position position="103"/>
    </location>
    <ligand>
        <name>NAD(+)</name>
        <dbReference type="ChEBI" id="CHEBI:57540"/>
    </ligand>
</feature>
<feature type="binding site" evidence="1">
    <location>
        <begin position="120"/>
        <end position="122"/>
    </location>
    <ligand>
        <name>NAD(+)</name>
        <dbReference type="ChEBI" id="CHEBI:57540"/>
    </ligand>
</feature>
<feature type="binding site" evidence="1">
    <location>
        <begin position="122"/>
        <end position="125"/>
    </location>
    <ligand>
        <name>substrate</name>
    </ligand>
</feature>
<feature type="binding site" evidence="1">
    <location>
        <position position="145"/>
    </location>
    <ligand>
        <name>NAD(+)</name>
        <dbReference type="ChEBI" id="CHEBI:57540"/>
    </ligand>
</feature>
<feature type="binding site" evidence="1">
    <location>
        <begin position="150"/>
        <end position="153"/>
    </location>
    <ligand>
        <name>substrate</name>
    </ligand>
</feature>
<feature type="binding site" evidence="1">
    <location>
        <position position="230"/>
    </location>
    <ligand>
        <name>substrate</name>
    </ligand>
</feature>
<feature type="modified residue" description="Phosphotyrosine" evidence="1">
    <location>
        <position position="221"/>
    </location>
</feature>
<comment type="function">
    <text evidence="1">Catalyzes the conversion of lactate to pyruvate.</text>
</comment>
<comment type="catalytic activity">
    <reaction evidence="1">
        <text>(S)-lactate + NAD(+) = pyruvate + NADH + H(+)</text>
        <dbReference type="Rhea" id="RHEA:23444"/>
        <dbReference type="ChEBI" id="CHEBI:15361"/>
        <dbReference type="ChEBI" id="CHEBI:15378"/>
        <dbReference type="ChEBI" id="CHEBI:16651"/>
        <dbReference type="ChEBI" id="CHEBI:57540"/>
        <dbReference type="ChEBI" id="CHEBI:57945"/>
        <dbReference type="EC" id="1.1.1.27"/>
    </reaction>
</comment>
<comment type="pathway">
    <text evidence="1">Fermentation; pyruvate fermentation to lactate; (S)-lactate from pyruvate: step 1/1.</text>
</comment>
<comment type="subunit">
    <text evidence="1">Homotetramer.</text>
</comment>
<comment type="subcellular location">
    <subcellularLocation>
        <location evidence="1">Cytoplasm</location>
    </subcellularLocation>
</comment>
<comment type="similarity">
    <text evidence="1">Belongs to the LDH/MDH superfamily. LDH family.</text>
</comment>
<name>LDH_LIMF3</name>
<protein>
    <recommendedName>
        <fullName evidence="1">L-lactate dehydrogenase</fullName>
        <shortName evidence="1">L-LDH</shortName>
        <ecNumber evidence="1">1.1.1.27</ecNumber>
    </recommendedName>
</protein>
<evidence type="ECO:0000255" key="1">
    <source>
        <dbReference type="HAMAP-Rule" id="MF_00488"/>
    </source>
</evidence>
<accession>B2GBW0</accession>
<dbReference type="EC" id="1.1.1.27" evidence="1"/>
<dbReference type="EMBL" id="AP008937">
    <property type="protein sequence ID" value="BAG27142.1"/>
    <property type="molecule type" value="Genomic_DNA"/>
</dbReference>
<dbReference type="RefSeq" id="WP_012391154.1">
    <property type="nucleotide sequence ID" value="NC_010610.1"/>
</dbReference>
<dbReference type="SMR" id="B2GBW0"/>
<dbReference type="KEGG" id="lfe:LAF_0806"/>
<dbReference type="eggNOG" id="COG0039">
    <property type="taxonomic scope" value="Bacteria"/>
</dbReference>
<dbReference type="HOGENOM" id="CLU_045401_1_1_9"/>
<dbReference type="UniPathway" id="UPA00554">
    <property type="reaction ID" value="UER00611"/>
</dbReference>
<dbReference type="Proteomes" id="UP000001697">
    <property type="component" value="Chromosome"/>
</dbReference>
<dbReference type="GO" id="GO:0005737">
    <property type="term" value="C:cytoplasm"/>
    <property type="evidence" value="ECO:0007669"/>
    <property type="project" value="UniProtKB-SubCell"/>
</dbReference>
<dbReference type="GO" id="GO:0004459">
    <property type="term" value="F:L-lactate dehydrogenase activity"/>
    <property type="evidence" value="ECO:0007669"/>
    <property type="project" value="UniProtKB-UniRule"/>
</dbReference>
<dbReference type="GO" id="GO:0006096">
    <property type="term" value="P:glycolytic process"/>
    <property type="evidence" value="ECO:0007669"/>
    <property type="project" value="UniProtKB-UniRule"/>
</dbReference>
<dbReference type="GO" id="GO:0006089">
    <property type="term" value="P:lactate metabolic process"/>
    <property type="evidence" value="ECO:0007669"/>
    <property type="project" value="TreeGrafter"/>
</dbReference>
<dbReference type="CDD" id="cd05291">
    <property type="entry name" value="HicDH_like"/>
    <property type="match status" value="1"/>
</dbReference>
<dbReference type="FunFam" id="3.40.50.720:FF:000018">
    <property type="entry name" value="Malate dehydrogenase"/>
    <property type="match status" value="1"/>
</dbReference>
<dbReference type="Gene3D" id="3.90.110.10">
    <property type="entry name" value="Lactate dehydrogenase/glycoside hydrolase, family 4, C-terminal"/>
    <property type="match status" value="1"/>
</dbReference>
<dbReference type="Gene3D" id="3.40.50.720">
    <property type="entry name" value="NAD(P)-binding Rossmann-like Domain"/>
    <property type="match status" value="1"/>
</dbReference>
<dbReference type="HAMAP" id="MF_00488">
    <property type="entry name" value="Lactate_dehydrog"/>
    <property type="match status" value="1"/>
</dbReference>
<dbReference type="InterPro" id="IPR001557">
    <property type="entry name" value="L-lactate/malate_DH"/>
</dbReference>
<dbReference type="InterPro" id="IPR011304">
    <property type="entry name" value="L-lactate_DH"/>
</dbReference>
<dbReference type="InterPro" id="IPR022383">
    <property type="entry name" value="Lactate/malate_DH_C"/>
</dbReference>
<dbReference type="InterPro" id="IPR001236">
    <property type="entry name" value="Lactate/malate_DH_N"/>
</dbReference>
<dbReference type="InterPro" id="IPR015955">
    <property type="entry name" value="Lactate_DH/Glyco_Ohase_4_C"/>
</dbReference>
<dbReference type="InterPro" id="IPR036291">
    <property type="entry name" value="NAD(P)-bd_dom_sf"/>
</dbReference>
<dbReference type="NCBIfam" id="TIGR01771">
    <property type="entry name" value="L-LDH-NAD"/>
    <property type="match status" value="1"/>
</dbReference>
<dbReference type="NCBIfam" id="NF000824">
    <property type="entry name" value="PRK00066.1"/>
    <property type="match status" value="1"/>
</dbReference>
<dbReference type="PANTHER" id="PTHR43128">
    <property type="entry name" value="L-2-HYDROXYCARBOXYLATE DEHYDROGENASE (NAD(P)(+))"/>
    <property type="match status" value="1"/>
</dbReference>
<dbReference type="PANTHER" id="PTHR43128:SF16">
    <property type="entry name" value="L-LACTATE DEHYDROGENASE"/>
    <property type="match status" value="1"/>
</dbReference>
<dbReference type="Pfam" id="PF02866">
    <property type="entry name" value="Ldh_1_C"/>
    <property type="match status" value="1"/>
</dbReference>
<dbReference type="Pfam" id="PF00056">
    <property type="entry name" value="Ldh_1_N"/>
    <property type="match status" value="1"/>
</dbReference>
<dbReference type="PIRSF" id="PIRSF000102">
    <property type="entry name" value="Lac_mal_DH"/>
    <property type="match status" value="1"/>
</dbReference>
<dbReference type="PRINTS" id="PR00086">
    <property type="entry name" value="LLDHDRGNASE"/>
</dbReference>
<dbReference type="SUPFAM" id="SSF56327">
    <property type="entry name" value="LDH C-terminal domain-like"/>
    <property type="match status" value="1"/>
</dbReference>
<dbReference type="SUPFAM" id="SSF51735">
    <property type="entry name" value="NAD(P)-binding Rossmann-fold domains"/>
    <property type="match status" value="1"/>
</dbReference>
<proteinExistence type="inferred from homology"/>
<gene>
    <name evidence="1" type="primary">ldh</name>
    <name type="ordered locus">LAF_0806</name>
</gene>
<reference key="1">
    <citation type="journal article" date="2008" name="DNA Res.">
        <title>Comparative genome analysis of Lactobacillus reuteri and Lactobacillus fermentum reveal a genomic island for reuterin and cobalamin production.</title>
        <authorList>
            <person name="Morita H."/>
            <person name="Toh H."/>
            <person name="Fukuda S."/>
            <person name="Horikawa H."/>
            <person name="Oshima K."/>
            <person name="Suzuki T."/>
            <person name="Murakami M."/>
            <person name="Hisamatsu S."/>
            <person name="Kato Y."/>
            <person name="Takizawa T."/>
            <person name="Fukuoka H."/>
            <person name="Yoshimura T."/>
            <person name="Itoh K."/>
            <person name="O'Sullivan D.J."/>
            <person name="McKay L.L."/>
            <person name="Ohno H."/>
            <person name="Kikuchi J."/>
            <person name="Masaoka T."/>
            <person name="Hattori M."/>
        </authorList>
    </citation>
    <scope>NUCLEOTIDE SEQUENCE [LARGE SCALE GENOMIC DNA]</scope>
    <source>
        <strain>NBRC 3956 / LMG 18251</strain>
    </source>
</reference>
<keyword id="KW-0963">Cytoplasm</keyword>
<keyword id="KW-0520">NAD</keyword>
<keyword id="KW-0560">Oxidoreductase</keyword>
<keyword id="KW-0597">Phosphoprotein</keyword>
<keyword id="KW-1185">Reference proteome</keyword>
<organism>
    <name type="scientific">Limosilactobacillus fermentum (strain NBRC 3956 / LMG 18251)</name>
    <name type="common">Lactobacillus fermentum</name>
    <dbReference type="NCBI Taxonomy" id="334390"/>
    <lineage>
        <taxon>Bacteria</taxon>
        <taxon>Bacillati</taxon>
        <taxon>Bacillota</taxon>
        <taxon>Bacilli</taxon>
        <taxon>Lactobacillales</taxon>
        <taxon>Lactobacillaceae</taxon>
        <taxon>Limosilactobacillus</taxon>
    </lineage>
</organism>
<sequence>MSKTHQKVVLIGDGAVGSSYAFAMVQQGLAQEFAIIDLNKKRTEGDALDLEDATPFTAPKLVYGADYDTCKDADLVVITAGAPQKPGETRLDLVDKNLKIIKSVVEPVVKSGFQGIFLVAANPVDILTYAVQKFSGFPRNKVVGSGTSLDSARLRVGLSKLFNVSPVDVNANMMAEHGDTEFAAFSSATIGGLPLYDLAEAKGISKDDLYKLEDDVRNKAYAIINSKGATFYGVATALMRISRAILRDENAVLPVGAPMSGEYGLKDIYIGTPAVINANGIAEVLEVPLDEREAKAMADSAKTLEEIAKNGMAKIQG</sequence>